<protein>
    <recommendedName>
        <fullName>Protein Spea_1705</fullName>
        <ecNumber evidence="2">4.2.1.77</ecNumber>
    </recommendedName>
</protein>
<evidence type="ECO:0000250" key="1">
    <source>
        <dbReference type="UniProtKB" id="Q4KGU2"/>
    </source>
</evidence>
<evidence type="ECO:0000269" key="2">
    <source>
    </source>
</evidence>
<evidence type="ECO:0000305" key="3"/>
<evidence type="ECO:0000312" key="4">
    <source>
        <dbReference type="EMBL" id="ABV87029.1"/>
    </source>
</evidence>
<reference key="1">
    <citation type="submission" date="2007-10" db="EMBL/GenBank/DDBJ databases">
        <title>Complete sequence of Shewanella pealeana ATCC 700345.</title>
        <authorList>
            <consortium name="US DOE Joint Genome Institute"/>
            <person name="Copeland A."/>
            <person name="Lucas S."/>
            <person name="Lapidus A."/>
            <person name="Barry K."/>
            <person name="Glavina del Rio T."/>
            <person name="Dalin E."/>
            <person name="Tice H."/>
            <person name="Pitluck S."/>
            <person name="Chertkov O."/>
            <person name="Brettin T."/>
            <person name="Bruce D."/>
            <person name="Detter J.C."/>
            <person name="Han C."/>
            <person name="Schmutz J."/>
            <person name="Larimer F."/>
            <person name="Land M."/>
            <person name="Hauser L."/>
            <person name="Kyrpides N."/>
            <person name="Kim E."/>
            <person name="Zhao J.-S.Z."/>
            <person name="Manno D."/>
            <person name="Hawari J."/>
            <person name="Richardson P."/>
        </authorList>
    </citation>
    <scope>NUCLEOTIDE SEQUENCE [LARGE SCALE GENOMIC DNA]</scope>
    <source>
        <strain>ATCC 700345 / ANG-SQ1</strain>
    </source>
</reference>
<reference key="2">
    <citation type="journal article" date="2014" name="Elife">
        <title>Prediction and characterization of enzymatic activities guided by sequence similarity and genome neighborhood networks.</title>
        <authorList>
            <person name="Zhao S."/>
            <person name="Sakai A."/>
            <person name="Zhang X."/>
            <person name="Vetting M.W."/>
            <person name="Kumar R."/>
            <person name="Hillerich B."/>
            <person name="San Francisco B."/>
            <person name="Solbiati J."/>
            <person name="Steves A."/>
            <person name="Brown S."/>
            <person name="Akiva E."/>
            <person name="Barber A."/>
            <person name="Seidel R.D."/>
            <person name="Babbitt P.C."/>
            <person name="Almo S.C."/>
            <person name="Gerlt J.A."/>
            <person name="Jacobson M.P."/>
        </authorList>
    </citation>
    <scope>FUNCTION</scope>
    <scope>CATALYTIC ACTIVITY</scope>
    <scope>BIOPHYSICOCHEMICAL PROPERTIES</scope>
</reference>
<feature type="chain" id="PRO_0000432261" description="Protein Spea_1705">
    <location>
        <begin position="1"/>
        <end position="346"/>
    </location>
</feature>
<feature type="active site" description="Proton acceptor" evidence="1">
    <location>
        <position position="101"/>
    </location>
</feature>
<feature type="binding site" evidence="1">
    <location>
        <begin position="102"/>
        <end position="103"/>
    </location>
    <ligand>
        <name>substrate</name>
    </ligand>
</feature>
<feature type="binding site" evidence="1">
    <location>
        <position position="262"/>
    </location>
    <ligand>
        <name>substrate</name>
    </ligand>
</feature>
<feature type="binding site" evidence="1">
    <location>
        <begin position="267"/>
        <end position="268"/>
    </location>
    <ligand>
        <name>substrate</name>
    </ligand>
</feature>
<sequence length="346" mass="37916">MQSITITPDLSSNFKDFVTIDAHTEGEPLRVIISGYPEIKGSTILEKRQYVQQNLDTYRKLLMHEPRGHADMYGALITEAVTEEADFGVLFLHNEGYSSMCGHGILALVKVMCQTDSIDLGLEPRTIKIDSPAGLITAKAYRDSQGKIQASFKNVDSWADALNCSVNVEGFGEVNYDIGFGGAYYAYVDADEHGISCGQDNVAQLIDVGRRIKHAVMASHTLVHPLEEDLSFLYGTIFTSKKVTNPEAHSRHVCIFADGEVDRSPTGTGVSARVALLYAKGEVALNTPIMIESIVDGRMIVSASAESEFHGKQGVIPEVSGRSFITGKHQFFIDPDDVFQNGFMLR</sequence>
<keyword id="KW-0456">Lyase</keyword>
<keyword id="KW-1185">Reference proteome</keyword>
<proteinExistence type="evidence at protein level"/>
<organism>
    <name type="scientific">Shewanella pealeana (strain ATCC 700345 / ANG-SQ1)</name>
    <dbReference type="NCBI Taxonomy" id="398579"/>
    <lineage>
        <taxon>Bacteria</taxon>
        <taxon>Pseudomonadati</taxon>
        <taxon>Pseudomonadota</taxon>
        <taxon>Gammaproteobacteria</taxon>
        <taxon>Alteromonadales</taxon>
        <taxon>Shewanellaceae</taxon>
        <taxon>Shewanella</taxon>
    </lineage>
</organism>
<comment type="function">
    <text evidence="2 3">In vitro, catalyzes the dehydration of trans-3-hydroxy-L-proline (t3LHyp) to Delta(1)-pyrroline-2-carboxylate (Pyr2C), albeit with very low efficiency. The physiological substrate may be different. Displays neither trans-4-hydroxy-L-proline (t4LHyp) epimerase nor proline racemase activity.</text>
</comment>
<comment type="catalytic activity">
    <reaction evidence="2">
        <text>trans-3-hydroxy-L-proline = 1-pyrroline-2-carboxylate + H2O</text>
        <dbReference type="Rhea" id="RHEA:10320"/>
        <dbReference type="ChEBI" id="CHEBI:15377"/>
        <dbReference type="ChEBI" id="CHEBI:39785"/>
        <dbReference type="ChEBI" id="CHEBI:57938"/>
        <dbReference type="EC" id="4.2.1.77"/>
    </reaction>
</comment>
<comment type="biophysicochemical properties">
    <kinetics>
        <text evidence="2">kcat is 0.15 sec(-1) for t3LHyp dehydration. The reaction is too slow to measure KM for t3LHyp.</text>
    </kinetics>
</comment>
<comment type="similarity">
    <text evidence="3">Belongs to the proline racemase family.</text>
</comment>
<dbReference type="EC" id="4.2.1.77" evidence="2"/>
<dbReference type="EMBL" id="CP000851">
    <property type="protein sequence ID" value="ABV87029.1"/>
    <property type="molecule type" value="Genomic_DNA"/>
</dbReference>
<dbReference type="RefSeq" id="WP_012154949.1">
    <property type="nucleotide sequence ID" value="NC_009901.1"/>
</dbReference>
<dbReference type="SMR" id="A8H392"/>
<dbReference type="STRING" id="398579.Spea_1705"/>
<dbReference type="KEGG" id="spl:Spea_1705"/>
<dbReference type="eggNOG" id="COG3938">
    <property type="taxonomic scope" value="Bacteria"/>
</dbReference>
<dbReference type="HOGENOM" id="CLU_036729_0_0_6"/>
<dbReference type="OrthoDB" id="181267at2"/>
<dbReference type="SABIO-RK" id="A8H392"/>
<dbReference type="Proteomes" id="UP000002608">
    <property type="component" value="Chromosome"/>
</dbReference>
<dbReference type="GO" id="GO:0047580">
    <property type="term" value="F:4-hydroxyproline epimerase activity"/>
    <property type="evidence" value="ECO:0007669"/>
    <property type="project" value="TreeGrafter"/>
</dbReference>
<dbReference type="GO" id="GO:0050346">
    <property type="term" value="F:trans-L-3-hydroxyproline dehydratase activity"/>
    <property type="evidence" value="ECO:0007669"/>
    <property type="project" value="UniProtKB-EC"/>
</dbReference>
<dbReference type="FunFam" id="3.10.310.10:FF:000003">
    <property type="entry name" value="Proline racemase"/>
    <property type="match status" value="1"/>
</dbReference>
<dbReference type="Gene3D" id="3.10.310.10">
    <property type="entry name" value="Diaminopimelate Epimerase, Chain A, domain 1"/>
    <property type="match status" value="2"/>
</dbReference>
<dbReference type="InterPro" id="IPR008794">
    <property type="entry name" value="Pro_racemase_fam"/>
</dbReference>
<dbReference type="PANTHER" id="PTHR33442">
    <property type="entry name" value="TRANS-3-HYDROXY-L-PROLINE DEHYDRATASE"/>
    <property type="match status" value="1"/>
</dbReference>
<dbReference type="PANTHER" id="PTHR33442:SF1">
    <property type="entry name" value="TRANS-3-HYDROXY-L-PROLINE DEHYDRATASE"/>
    <property type="match status" value="1"/>
</dbReference>
<dbReference type="Pfam" id="PF05544">
    <property type="entry name" value="Pro_racemase"/>
    <property type="match status" value="1"/>
</dbReference>
<dbReference type="PIRSF" id="PIRSF029792">
    <property type="entry name" value="Pro_racemase"/>
    <property type="match status" value="1"/>
</dbReference>
<dbReference type="SFLD" id="SFLDS00028">
    <property type="entry name" value="Proline_Racemase"/>
    <property type="match status" value="1"/>
</dbReference>
<dbReference type="SUPFAM" id="SSF54506">
    <property type="entry name" value="Diaminopimelate epimerase-like"/>
    <property type="match status" value="1"/>
</dbReference>
<name>Y1705_SHEPA</name>
<gene>
    <name evidence="4" type="ordered locus">Spea_1705</name>
</gene>
<accession>A8H392</accession>